<sequence>MSSFRLGVSRVARQVRAPCVRNTRRYASDSHAPADHTHSAAGHGEHHHANAADANEELGTAFYVIFGAIPAFGALYYFSRPGKDGQPNSITKWLQKWEEHQEALADKNALVTAALEQAAHDKHLFYYVDQLRSGHYEMKYPEVFQHGSARNVPAGTYIPLDKVVEVYRKQHLDEEERKAKKLAAAN</sequence>
<organism>
    <name type="scientific">Neurospora crassa (strain ATCC 24698 / 74-OR23-1A / CBS 708.71 / DSM 1257 / FGSC 987)</name>
    <dbReference type="NCBI Taxonomy" id="367110"/>
    <lineage>
        <taxon>Eukaryota</taxon>
        <taxon>Fungi</taxon>
        <taxon>Dikarya</taxon>
        <taxon>Ascomycota</taxon>
        <taxon>Pezizomycotina</taxon>
        <taxon>Sordariomycetes</taxon>
        <taxon>Sordariomycetidae</taxon>
        <taxon>Sordariales</taxon>
        <taxon>Sordariaceae</taxon>
        <taxon>Neurospora</taxon>
    </lineage>
</organism>
<name>NURM_NEUCR</name>
<keyword id="KW-0903">Direct protein sequencing</keyword>
<keyword id="KW-0472">Membrane</keyword>
<keyword id="KW-0496">Mitochondrion</keyword>
<keyword id="KW-0999">Mitochondrion inner membrane</keyword>
<keyword id="KW-0520">NAD</keyword>
<keyword id="KW-0560">Oxidoreductase</keyword>
<keyword id="KW-1185">Reference proteome</keyword>
<keyword id="KW-0809">Transit peptide</keyword>
<keyword id="KW-1278">Translocase</keyword>
<keyword id="KW-0812">Transmembrane</keyword>
<keyword id="KW-1133">Transmembrane helix</keyword>
<keyword id="KW-0830">Ubiquinone</keyword>
<proteinExistence type="evidence at protein level"/>
<accession>P42116</accession>
<accession>Q7SGF3</accession>
<gene>
    <name type="primary">nuo17.8</name>
    <name type="ORF">B20J13.200</name>
    <name type="ORF">NCU00969</name>
</gene>
<protein>
    <recommendedName>
        <fullName>NADH-ubiquinone oxidoreductase 17.8 kDa subunit, mitochondrial</fullName>
        <ecNumber>7.1.1.2</ecNumber>
    </recommendedName>
    <alternativeName>
        <fullName>Complex I-17.8kD</fullName>
        <shortName>CI-17.8kD</shortName>
    </alternativeName>
</protein>
<comment type="function">
    <text>Transfer of electrons from NADH to the respiratory chain. The immediate electron acceptor for the enzyme is believed to be ubiquinone.</text>
</comment>
<comment type="catalytic activity">
    <reaction>
        <text>a ubiquinone + NADH + 5 H(+)(in) = a ubiquinol + NAD(+) + 4 H(+)(out)</text>
        <dbReference type="Rhea" id="RHEA:29091"/>
        <dbReference type="Rhea" id="RHEA-COMP:9565"/>
        <dbReference type="Rhea" id="RHEA-COMP:9566"/>
        <dbReference type="ChEBI" id="CHEBI:15378"/>
        <dbReference type="ChEBI" id="CHEBI:16389"/>
        <dbReference type="ChEBI" id="CHEBI:17976"/>
        <dbReference type="ChEBI" id="CHEBI:57540"/>
        <dbReference type="ChEBI" id="CHEBI:57945"/>
        <dbReference type="EC" id="7.1.1.2"/>
    </reaction>
</comment>
<comment type="subunit">
    <text>Complex I is composed of about 40 different subunits.</text>
</comment>
<comment type="subcellular location">
    <subcellularLocation>
        <location>Mitochondrion inner membrane</location>
        <topology>Single-pass membrane protein</topology>
    </subcellularLocation>
</comment>
<reference key="1">
    <citation type="journal article" date="1993" name="Biochem. J.">
        <title>Cloning, in vitro mitochondrial import and membrane assembly of the 17.8 kDa subunit of complex I from Neurospora crassa.</title>
        <authorList>
            <person name="Azevedo J.E."/>
            <person name="Abrolat-Scharff J."/>
            <person name="Eckerskorn C."/>
            <person name="Werner S."/>
        </authorList>
    </citation>
    <scope>NUCLEOTIDE SEQUENCE</scope>
    <scope>PROTEIN SEQUENCE OF 27-45</scope>
    <source>
        <strain>ATCC 24698 / 74-OR23-1A / CBS 708.71 / DSM 1257 / FGSC 987</strain>
    </source>
</reference>
<reference key="2">
    <citation type="journal article" date="2003" name="Nucleic Acids Res.">
        <title>What's in the genome of a filamentous fungus? Analysis of the Neurospora genome sequence.</title>
        <authorList>
            <person name="Mannhaupt G."/>
            <person name="Montrone C."/>
            <person name="Haase D."/>
            <person name="Mewes H.-W."/>
            <person name="Aign V."/>
            <person name="Hoheisel J.D."/>
            <person name="Fartmann B."/>
            <person name="Nyakatura G."/>
            <person name="Kempken F."/>
            <person name="Maier J."/>
            <person name="Schulte U."/>
        </authorList>
    </citation>
    <scope>NUCLEOTIDE SEQUENCE [LARGE SCALE GENOMIC DNA]</scope>
    <source>
        <strain>ATCC 24698 / 74-OR23-1A / CBS 708.71 / DSM 1257 / FGSC 987</strain>
    </source>
</reference>
<reference key="3">
    <citation type="journal article" date="2003" name="Nature">
        <title>The genome sequence of the filamentous fungus Neurospora crassa.</title>
        <authorList>
            <person name="Galagan J.E."/>
            <person name="Calvo S.E."/>
            <person name="Borkovich K.A."/>
            <person name="Selker E.U."/>
            <person name="Read N.D."/>
            <person name="Jaffe D.B."/>
            <person name="FitzHugh W."/>
            <person name="Ma L.-J."/>
            <person name="Smirnov S."/>
            <person name="Purcell S."/>
            <person name="Rehman B."/>
            <person name="Elkins T."/>
            <person name="Engels R."/>
            <person name="Wang S."/>
            <person name="Nielsen C.B."/>
            <person name="Butler J."/>
            <person name="Endrizzi M."/>
            <person name="Qui D."/>
            <person name="Ianakiev P."/>
            <person name="Bell-Pedersen D."/>
            <person name="Nelson M.A."/>
            <person name="Werner-Washburne M."/>
            <person name="Selitrennikoff C.P."/>
            <person name="Kinsey J.A."/>
            <person name="Braun E.L."/>
            <person name="Zelter A."/>
            <person name="Schulte U."/>
            <person name="Kothe G.O."/>
            <person name="Jedd G."/>
            <person name="Mewes H.-W."/>
            <person name="Staben C."/>
            <person name="Marcotte E."/>
            <person name="Greenberg D."/>
            <person name="Roy A."/>
            <person name="Foley K."/>
            <person name="Naylor J."/>
            <person name="Stange-Thomann N."/>
            <person name="Barrett R."/>
            <person name="Gnerre S."/>
            <person name="Kamal M."/>
            <person name="Kamvysselis M."/>
            <person name="Mauceli E.W."/>
            <person name="Bielke C."/>
            <person name="Rudd S."/>
            <person name="Frishman D."/>
            <person name="Krystofova S."/>
            <person name="Rasmussen C."/>
            <person name="Metzenberg R.L."/>
            <person name="Perkins D.D."/>
            <person name="Kroken S."/>
            <person name="Cogoni C."/>
            <person name="Macino G."/>
            <person name="Catcheside D.E.A."/>
            <person name="Li W."/>
            <person name="Pratt R.J."/>
            <person name="Osmani S.A."/>
            <person name="DeSouza C.P.C."/>
            <person name="Glass N.L."/>
            <person name="Orbach M.J."/>
            <person name="Berglund J.A."/>
            <person name="Voelker R."/>
            <person name="Yarden O."/>
            <person name="Plamann M."/>
            <person name="Seiler S."/>
            <person name="Dunlap J.C."/>
            <person name="Radford A."/>
            <person name="Aramayo R."/>
            <person name="Natvig D.O."/>
            <person name="Alex L.A."/>
            <person name="Mannhaupt G."/>
            <person name="Ebbole D.J."/>
            <person name="Freitag M."/>
            <person name="Paulsen I."/>
            <person name="Sachs M.S."/>
            <person name="Lander E.S."/>
            <person name="Nusbaum C."/>
            <person name="Birren B.W."/>
        </authorList>
    </citation>
    <scope>NUCLEOTIDE SEQUENCE [LARGE SCALE GENOMIC DNA]</scope>
    <source>
        <strain>ATCC 24698 / 74-OR23-1A / CBS 708.71 / DSM 1257 / FGSC 987</strain>
    </source>
</reference>
<evidence type="ECO:0000255" key="1"/>
<evidence type="ECO:0000256" key="2">
    <source>
        <dbReference type="SAM" id="MobiDB-lite"/>
    </source>
</evidence>
<evidence type="ECO:0000269" key="3">
    <source>
    </source>
</evidence>
<dbReference type="EC" id="7.1.1.2"/>
<dbReference type="EMBL" id="X71414">
    <property type="protein sequence ID" value="CAA50537.1"/>
    <property type="molecule type" value="mRNA"/>
</dbReference>
<dbReference type="EMBL" id="BX842629">
    <property type="protein sequence ID" value="CAE76339.1"/>
    <property type="molecule type" value="Genomic_DNA"/>
</dbReference>
<dbReference type="EMBL" id="CM002236">
    <property type="protein sequence ID" value="EAA35926.1"/>
    <property type="molecule type" value="Genomic_DNA"/>
</dbReference>
<dbReference type="PIR" id="S35057">
    <property type="entry name" value="S35057"/>
</dbReference>
<dbReference type="RefSeq" id="XP_965162.1">
    <property type="nucleotide sequence ID" value="XM_960069.3"/>
</dbReference>
<dbReference type="SMR" id="P42116"/>
<dbReference type="STRING" id="367110.P42116"/>
<dbReference type="PaxDb" id="5141-EFNCRP00000000759"/>
<dbReference type="EnsemblFungi" id="EAA35926">
    <property type="protein sequence ID" value="EAA35926"/>
    <property type="gene ID" value="NCU00969"/>
</dbReference>
<dbReference type="GeneID" id="3881298"/>
<dbReference type="KEGG" id="ncr:NCU00969"/>
<dbReference type="VEuPathDB" id="FungiDB:NCU00969"/>
<dbReference type="HOGENOM" id="CLU_095735_0_1_1"/>
<dbReference type="InParanoid" id="P42116"/>
<dbReference type="OrthoDB" id="2120038at2759"/>
<dbReference type="Proteomes" id="UP000001805">
    <property type="component" value="Chromosome 1, Linkage Group I"/>
</dbReference>
<dbReference type="GO" id="GO:0005743">
    <property type="term" value="C:mitochondrial inner membrane"/>
    <property type="evidence" value="ECO:0007669"/>
    <property type="project" value="UniProtKB-SubCell"/>
</dbReference>
<dbReference type="GO" id="GO:0008137">
    <property type="term" value="F:NADH dehydrogenase (ubiquinone) activity"/>
    <property type="evidence" value="ECO:0007669"/>
    <property type="project" value="UniProtKB-EC"/>
</dbReference>
<dbReference type="InterPro" id="IPR034444">
    <property type="entry name" value="Nuo17.8"/>
</dbReference>
<dbReference type="PANTHER" id="PTHR42100">
    <property type="entry name" value="OXIDOREDUCTASE 178 KDA SUBUNIT, PUTATIVE (AFU_ORTHOLOGUE AFUA_8G04320)-RELATED"/>
    <property type="match status" value="1"/>
</dbReference>
<dbReference type="PANTHER" id="PTHR42100:SF1">
    <property type="entry name" value="OXIDOREDUCTASE 178 KDA SUBUNIT, PUTATIVE (AFU_ORTHOLOGUE AFUA_8G04320)-RELATED"/>
    <property type="match status" value="1"/>
</dbReference>
<feature type="transit peptide" description="Mitochondrion" evidence="3">
    <location>
        <begin position="1"/>
        <end position="26"/>
    </location>
</feature>
<feature type="chain" id="PRO_0000020040" description="NADH-ubiquinone oxidoreductase 17.8 kDa subunit, mitochondrial">
    <location>
        <begin position="27"/>
        <end position="186"/>
    </location>
</feature>
<feature type="transmembrane region" description="Helical" evidence="1">
    <location>
        <begin position="58"/>
        <end position="78"/>
    </location>
</feature>
<feature type="region of interest" description="Disordered" evidence="2">
    <location>
        <begin position="22"/>
        <end position="49"/>
    </location>
</feature>
<feature type="compositionally biased region" description="Basic and acidic residues" evidence="2">
    <location>
        <begin position="26"/>
        <end position="49"/>
    </location>
</feature>